<gene>
    <name evidence="1" type="primary">smg</name>
    <name type="ordered locus">SFV_3304</name>
</gene>
<comment type="similarity">
    <text evidence="1">Belongs to the Smg family.</text>
</comment>
<proteinExistence type="inferred from homology"/>
<reference key="1">
    <citation type="journal article" date="2006" name="BMC Genomics">
        <title>Complete genome sequence of Shigella flexneri 5b and comparison with Shigella flexneri 2a.</title>
        <authorList>
            <person name="Nie H."/>
            <person name="Yang F."/>
            <person name="Zhang X."/>
            <person name="Yang J."/>
            <person name="Chen L."/>
            <person name="Wang J."/>
            <person name="Xiong Z."/>
            <person name="Peng J."/>
            <person name="Sun L."/>
            <person name="Dong J."/>
            <person name="Xue Y."/>
            <person name="Xu X."/>
            <person name="Chen S."/>
            <person name="Yao Z."/>
            <person name="Shen Y."/>
            <person name="Jin Q."/>
        </authorList>
    </citation>
    <scope>NUCLEOTIDE SEQUENCE [LARGE SCALE GENOMIC DNA]</scope>
    <source>
        <strain>8401</strain>
    </source>
</reference>
<name>SMG_SHIF8</name>
<evidence type="ECO:0000255" key="1">
    <source>
        <dbReference type="HAMAP-Rule" id="MF_00598"/>
    </source>
</evidence>
<sequence>MFDVLMYLFETYIHTEAELRVDQDKLEQDLTDAGFEREDIYNALLWLEKLADYQEGLAEPMQLASDPLSMRIYTPEECERLDASCRGFLLFLEQIQVLNLETREMVIERVLALDNAEFELDDLKWVILMVLFNIPGCENAYQQMEELLFEVNEGMLH</sequence>
<dbReference type="EMBL" id="CP000266">
    <property type="protein sequence ID" value="ABF05347.1"/>
    <property type="molecule type" value="Genomic_DNA"/>
</dbReference>
<dbReference type="RefSeq" id="WP_000460680.1">
    <property type="nucleotide sequence ID" value="NC_008258.1"/>
</dbReference>
<dbReference type="SMR" id="Q0T018"/>
<dbReference type="GeneID" id="93778703"/>
<dbReference type="KEGG" id="sfv:SFV_3304"/>
<dbReference type="HOGENOM" id="CLU_133242_0_0_6"/>
<dbReference type="Proteomes" id="UP000000659">
    <property type="component" value="Chromosome"/>
</dbReference>
<dbReference type="HAMAP" id="MF_00598">
    <property type="entry name" value="Smg"/>
    <property type="match status" value="1"/>
</dbReference>
<dbReference type="InterPro" id="IPR007456">
    <property type="entry name" value="Smg"/>
</dbReference>
<dbReference type="NCBIfam" id="NF002897">
    <property type="entry name" value="PRK03430.1"/>
    <property type="match status" value="1"/>
</dbReference>
<dbReference type="PANTHER" id="PTHR38692">
    <property type="entry name" value="PROTEIN SMG"/>
    <property type="match status" value="1"/>
</dbReference>
<dbReference type="PANTHER" id="PTHR38692:SF1">
    <property type="entry name" value="PROTEIN SMG"/>
    <property type="match status" value="1"/>
</dbReference>
<dbReference type="Pfam" id="PF04361">
    <property type="entry name" value="DUF494"/>
    <property type="match status" value="1"/>
</dbReference>
<accession>Q0T018</accession>
<feature type="chain" id="PRO_1000025675" description="Protein Smg">
    <location>
        <begin position="1"/>
        <end position="157"/>
    </location>
</feature>
<organism>
    <name type="scientific">Shigella flexneri serotype 5b (strain 8401)</name>
    <dbReference type="NCBI Taxonomy" id="373384"/>
    <lineage>
        <taxon>Bacteria</taxon>
        <taxon>Pseudomonadati</taxon>
        <taxon>Pseudomonadota</taxon>
        <taxon>Gammaproteobacteria</taxon>
        <taxon>Enterobacterales</taxon>
        <taxon>Enterobacteriaceae</taxon>
        <taxon>Shigella</taxon>
    </lineage>
</organism>
<protein>
    <recommendedName>
        <fullName evidence="1">Protein Smg</fullName>
    </recommendedName>
</protein>